<proteinExistence type="inferred from homology"/>
<protein>
    <recommendedName>
        <fullName evidence="1">NADH-quinone oxidoreductase subunit K</fullName>
        <ecNumber evidence="1">7.1.1.-</ecNumber>
    </recommendedName>
    <alternativeName>
        <fullName evidence="1">NADH dehydrogenase I subunit K</fullName>
    </alternativeName>
    <alternativeName>
        <fullName evidence="1">NDH-1 subunit K</fullName>
    </alternativeName>
</protein>
<gene>
    <name evidence="1" type="primary">nuoK</name>
    <name type="ordered locus">BMA1819</name>
</gene>
<accession>Q62IP5</accession>
<feature type="chain" id="PRO_0000389988" description="NADH-quinone oxidoreductase subunit K">
    <location>
        <begin position="1"/>
        <end position="101"/>
    </location>
</feature>
<feature type="transmembrane region" description="Helical" evidence="1">
    <location>
        <begin position="4"/>
        <end position="24"/>
    </location>
</feature>
<feature type="transmembrane region" description="Helical" evidence="1">
    <location>
        <begin position="29"/>
        <end position="49"/>
    </location>
</feature>
<feature type="transmembrane region" description="Helical" evidence="1">
    <location>
        <begin position="61"/>
        <end position="81"/>
    </location>
</feature>
<reference key="1">
    <citation type="journal article" date="2004" name="Proc. Natl. Acad. Sci. U.S.A.">
        <title>Structural flexibility in the Burkholderia mallei genome.</title>
        <authorList>
            <person name="Nierman W.C."/>
            <person name="DeShazer D."/>
            <person name="Kim H.S."/>
            <person name="Tettelin H."/>
            <person name="Nelson K.E."/>
            <person name="Feldblyum T.V."/>
            <person name="Ulrich R.L."/>
            <person name="Ronning C.M."/>
            <person name="Brinkac L.M."/>
            <person name="Daugherty S.C."/>
            <person name="Davidsen T.D."/>
            <person name="DeBoy R.T."/>
            <person name="Dimitrov G."/>
            <person name="Dodson R.J."/>
            <person name="Durkin A.S."/>
            <person name="Gwinn M.L."/>
            <person name="Haft D.H."/>
            <person name="Khouri H.M."/>
            <person name="Kolonay J.F."/>
            <person name="Madupu R."/>
            <person name="Mohammoud Y."/>
            <person name="Nelson W.C."/>
            <person name="Radune D."/>
            <person name="Romero C.M."/>
            <person name="Sarria S."/>
            <person name="Selengut J."/>
            <person name="Shamblin C."/>
            <person name="Sullivan S.A."/>
            <person name="White O."/>
            <person name="Yu Y."/>
            <person name="Zafar N."/>
            <person name="Zhou L."/>
            <person name="Fraser C.M."/>
        </authorList>
    </citation>
    <scope>NUCLEOTIDE SEQUENCE [LARGE SCALE GENOMIC DNA]</scope>
    <source>
        <strain>ATCC 23344</strain>
    </source>
</reference>
<dbReference type="EC" id="7.1.1.-" evidence="1"/>
<dbReference type="EMBL" id="CP000010">
    <property type="protein sequence ID" value="AAU49821.1"/>
    <property type="molecule type" value="Genomic_DNA"/>
</dbReference>
<dbReference type="RefSeq" id="WP_004185739.1">
    <property type="nucleotide sequence ID" value="NC_006348.1"/>
</dbReference>
<dbReference type="RefSeq" id="YP_103424.1">
    <property type="nucleotide sequence ID" value="NC_006348.1"/>
</dbReference>
<dbReference type="SMR" id="Q62IP5"/>
<dbReference type="GeneID" id="98107315"/>
<dbReference type="KEGG" id="bma:BMA1819"/>
<dbReference type="PATRIC" id="fig|243160.12.peg.1857"/>
<dbReference type="eggNOG" id="COG0713">
    <property type="taxonomic scope" value="Bacteria"/>
</dbReference>
<dbReference type="HOGENOM" id="CLU_144724_2_0_4"/>
<dbReference type="PRO" id="PR:Q62IP5"/>
<dbReference type="Proteomes" id="UP000006693">
    <property type="component" value="Chromosome 1"/>
</dbReference>
<dbReference type="GO" id="GO:0030964">
    <property type="term" value="C:NADH dehydrogenase complex"/>
    <property type="evidence" value="ECO:0007669"/>
    <property type="project" value="TreeGrafter"/>
</dbReference>
<dbReference type="GO" id="GO:0005886">
    <property type="term" value="C:plasma membrane"/>
    <property type="evidence" value="ECO:0007669"/>
    <property type="project" value="UniProtKB-SubCell"/>
</dbReference>
<dbReference type="GO" id="GO:0050136">
    <property type="term" value="F:NADH:ubiquinone reductase (non-electrogenic) activity"/>
    <property type="evidence" value="ECO:0007669"/>
    <property type="project" value="UniProtKB-UniRule"/>
</dbReference>
<dbReference type="GO" id="GO:0048038">
    <property type="term" value="F:quinone binding"/>
    <property type="evidence" value="ECO:0007669"/>
    <property type="project" value="UniProtKB-KW"/>
</dbReference>
<dbReference type="GO" id="GO:0042773">
    <property type="term" value="P:ATP synthesis coupled electron transport"/>
    <property type="evidence" value="ECO:0007669"/>
    <property type="project" value="InterPro"/>
</dbReference>
<dbReference type="FunFam" id="1.10.287.3510:FF:000001">
    <property type="entry name" value="NADH-quinone oxidoreductase subunit K"/>
    <property type="match status" value="1"/>
</dbReference>
<dbReference type="Gene3D" id="1.10.287.3510">
    <property type="match status" value="1"/>
</dbReference>
<dbReference type="HAMAP" id="MF_01456">
    <property type="entry name" value="NDH1_NuoK"/>
    <property type="match status" value="1"/>
</dbReference>
<dbReference type="InterPro" id="IPR001133">
    <property type="entry name" value="NADH_UbQ_OxRdtase_chain4L/K"/>
</dbReference>
<dbReference type="InterPro" id="IPR039428">
    <property type="entry name" value="NUOK/Mnh_C1-like"/>
</dbReference>
<dbReference type="NCBIfam" id="NF004320">
    <property type="entry name" value="PRK05715.1-2"/>
    <property type="match status" value="1"/>
</dbReference>
<dbReference type="NCBIfam" id="NF004321">
    <property type="entry name" value="PRK05715.1-3"/>
    <property type="match status" value="1"/>
</dbReference>
<dbReference type="NCBIfam" id="NF004323">
    <property type="entry name" value="PRK05715.1-5"/>
    <property type="match status" value="1"/>
</dbReference>
<dbReference type="PANTHER" id="PTHR11434:SF21">
    <property type="entry name" value="NADH DEHYDROGENASE SUBUNIT 4L-RELATED"/>
    <property type="match status" value="1"/>
</dbReference>
<dbReference type="PANTHER" id="PTHR11434">
    <property type="entry name" value="NADH-UBIQUINONE OXIDOREDUCTASE SUBUNIT ND4L"/>
    <property type="match status" value="1"/>
</dbReference>
<dbReference type="Pfam" id="PF00420">
    <property type="entry name" value="Oxidored_q2"/>
    <property type="match status" value="1"/>
</dbReference>
<comment type="function">
    <text evidence="1">NDH-1 shuttles electrons from NADH, via FMN and iron-sulfur (Fe-S) centers, to quinones in the respiratory chain. The immediate electron acceptor for the enzyme in this species is believed to be ubiquinone. Couples the redox reaction to proton translocation (for every two electrons transferred, four hydrogen ions are translocated across the cytoplasmic membrane), and thus conserves the redox energy in a proton gradient.</text>
</comment>
<comment type="catalytic activity">
    <reaction evidence="1">
        <text>a quinone + NADH + 5 H(+)(in) = a quinol + NAD(+) + 4 H(+)(out)</text>
        <dbReference type="Rhea" id="RHEA:57888"/>
        <dbReference type="ChEBI" id="CHEBI:15378"/>
        <dbReference type="ChEBI" id="CHEBI:24646"/>
        <dbReference type="ChEBI" id="CHEBI:57540"/>
        <dbReference type="ChEBI" id="CHEBI:57945"/>
        <dbReference type="ChEBI" id="CHEBI:132124"/>
    </reaction>
</comment>
<comment type="subunit">
    <text evidence="1">NDH-1 is composed of 14 different subunits. Subunits NuoA, H, J, K, L, M, N constitute the membrane sector of the complex.</text>
</comment>
<comment type="subcellular location">
    <subcellularLocation>
        <location evidence="1">Cell inner membrane</location>
        <topology evidence="1">Multi-pass membrane protein</topology>
    </subcellularLocation>
</comment>
<comment type="similarity">
    <text evidence="1">Belongs to the complex I subunit 4L family.</text>
</comment>
<evidence type="ECO:0000255" key="1">
    <source>
        <dbReference type="HAMAP-Rule" id="MF_01456"/>
    </source>
</evidence>
<sequence>MLTLAHYLVLGAILFAIAIVGIFLNRRNIIIILMAIELMLLAVNTNFVAFSHYLGDVHGQIFVFFVLTVAAAEAAIGLAILVTLFRKLDTINVEDLDQLKG</sequence>
<name>NUOK_BURMA</name>
<keyword id="KW-0997">Cell inner membrane</keyword>
<keyword id="KW-1003">Cell membrane</keyword>
<keyword id="KW-0472">Membrane</keyword>
<keyword id="KW-0520">NAD</keyword>
<keyword id="KW-0874">Quinone</keyword>
<keyword id="KW-1185">Reference proteome</keyword>
<keyword id="KW-1278">Translocase</keyword>
<keyword id="KW-0812">Transmembrane</keyword>
<keyword id="KW-1133">Transmembrane helix</keyword>
<keyword id="KW-0813">Transport</keyword>
<keyword id="KW-0830">Ubiquinone</keyword>
<organism>
    <name type="scientific">Burkholderia mallei (strain ATCC 23344)</name>
    <dbReference type="NCBI Taxonomy" id="243160"/>
    <lineage>
        <taxon>Bacteria</taxon>
        <taxon>Pseudomonadati</taxon>
        <taxon>Pseudomonadota</taxon>
        <taxon>Betaproteobacteria</taxon>
        <taxon>Burkholderiales</taxon>
        <taxon>Burkholderiaceae</taxon>
        <taxon>Burkholderia</taxon>
        <taxon>pseudomallei group</taxon>
    </lineage>
</organism>